<accession>P0DSM0</accession>
<name>TXSS2_PSETR</name>
<feature type="chain" id="PRO_0000447115" description="U1-pseudomyrmecitoxin-Pt1 subunit SS2">
    <location>
        <begin position="1"/>
        <end position="29"/>
    </location>
</feature>
<feature type="disulfide bond" description="Interchain (with C-21 in LS1 or LS2)" evidence="4">
    <location>
        <position position="17"/>
    </location>
</feature>
<feature type="disulfide bond" description="Interchain (with C-31 in LS1 or LS2)" evidence="4">
    <location>
        <position position="26"/>
    </location>
</feature>
<sequence length="29" mass="3369">LFGGLLDKLREKIKKYCNKENLDKACSKL</sequence>
<evidence type="ECO:0000269" key="1">
    <source>
    </source>
</evidence>
<evidence type="ECO:0000303" key="2">
    <source>
    </source>
</evidence>
<evidence type="ECO:0000303" key="3">
    <source>
    </source>
</evidence>
<evidence type="ECO:0000305" key="4"/>
<evidence type="ECO:0000305" key="5">
    <source>
    </source>
</evidence>
<protein>
    <recommendedName>
        <fullName evidence="4">U1-pseudomyrmecitoxin-Pt1 subunit SS2</fullName>
        <shortName evidence="4">U1-PSDTX-Pt1 subunit SS2</shortName>
    </recommendedName>
    <alternativeName>
        <fullName evidence="2">Myrmexin III subunit SS2/Myrmexin V subunit SS2</fullName>
    </alternativeName>
    <alternativeName>
        <fullName evidence="3">U1-pseudomyrmecitoxin-Pt1c subunit SS2/U1-pseudomyrmecitoxin-Pt1e subunit SS2</fullName>
        <shortName evidence="3">U1-PSDTX-Pt1c subunit SS2/U1-PSDTX-Pt1e subunit SS2</shortName>
    </alternativeName>
</protein>
<comment type="function">
    <text evidence="1">This heterodimer may have anti-inflammatory properties, since the myrmexin complex (composed of 6 SS-LS heterodimers) inhibits carrageenin-induced edema in a dose-dependent manner (after subcutaneous injection into rats).</text>
</comment>
<comment type="subunit">
    <text evidence="1">Heterodimer composed of subunit SS2 and subunit LS1 (U1-PSDTX-Pt1e), and heterodimer composed of subunit SS2 and LS2 (U1-PSDTX-Pt1c); disulfide-linked.</text>
</comment>
<comment type="subcellular location">
    <subcellularLocation>
        <location evidence="1">Secreted</location>
    </subcellularLocation>
</comment>
<comment type="tissue specificity">
    <text evidence="5">Expressed by the venom gland.</text>
</comment>
<comment type="miscellaneous">
    <text evidence="5">There are 6 heterodimeric myrmexins which consist of a small subunit (SS1 or SS2 or SS3) disulfide-linked to a larger, quite structurally unrelated subunit (LS1 or LS2).</text>
</comment>
<comment type="miscellaneous">
    <text evidence="1">MALDI experiments give a mass of 7090 Da for U1-PSDTX-Pt1c heterodimer (SS2+LS2).</text>
</comment>
<comment type="miscellaneous">
    <text evidence="1">MALDI experiments give a mass of 7017 Da for U1-PSDTX-Pt1e heterodimer (SS2+LS1).</text>
</comment>
<comment type="similarity">
    <text evidence="4">Belongs to the myrmexin family.</text>
</comment>
<dbReference type="GO" id="GO:0005576">
    <property type="term" value="C:extracellular region"/>
    <property type="evidence" value="ECO:0007669"/>
    <property type="project" value="UniProtKB-SubCell"/>
</dbReference>
<keyword id="KW-0903">Direct protein sequencing</keyword>
<keyword id="KW-1015">Disulfide bond</keyword>
<keyword id="KW-0964">Secreted</keyword>
<organism>
    <name type="scientific">Pseudomyrmex triplarinus</name>
    <name type="common">Ant</name>
    <dbReference type="NCBI Taxonomy" id="600763"/>
    <lineage>
        <taxon>Eukaryota</taxon>
        <taxon>Metazoa</taxon>
        <taxon>Ecdysozoa</taxon>
        <taxon>Arthropoda</taxon>
        <taxon>Hexapoda</taxon>
        <taxon>Insecta</taxon>
        <taxon>Pterygota</taxon>
        <taxon>Neoptera</taxon>
        <taxon>Endopterygota</taxon>
        <taxon>Hymenoptera</taxon>
        <taxon>Apocrita</taxon>
        <taxon>Aculeata</taxon>
        <taxon>Formicoidea</taxon>
        <taxon>Formicidae</taxon>
        <taxon>Pseudomyrmecinae</taxon>
        <taxon>Pseudomyrmex</taxon>
    </lineage>
</organism>
<reference key="1">
    <citation type="journal article" date="2000" name="Toxicon">
        <title>Isolation and characterization of myrmexins, six isoforms of venom proteins with anti-inflammatory activity from the tropical ant, Pseudomyrmex triplarinus.</title>
        <authorList>
            <person name="Pan J."/>
            <person name="Hink W.F."/>
        </authorList>
    </citation>
    <scope>PROTEIN SEQUENCE</scope>
    <scope>FUNCTION</scope>
    <scope>SUBCELLULAR LOCATION</scope>
    <scope>SUBUNIT</scope>
    <scope>IDENTIFICATION BY MASS SPECTROMETRY</scope>
    <source>
        <tissue>Venom</tissue>
    </source>
</reference>
<reference key="2">
    <citation type="journal article" date="2016" name="Toxins">
        <title>The biochemical toxin arsenal from ant venoms.</title>
        <authorList>
            <person name="Touchard A."/>
            <person name="Aili S.R."/>
            <person name="Fox E.G."/>
            <person name="Escoubas P."/>
            <person name="Orivel J."/>
            <person name="Nicholson G.M."/>
            <person name="Dejean A."/>
        </authorList>
    </citation>
    <scope>REVIEW</scope>
    <scope>NOMENCLATURE</scope>
</reference>
<proteinExistence type="evidence at protein level"/>